<protein>
    <recommendedName>
        <fullName evidence="1">Isoleucine--tRNA ligase</fullName>
        <ecNumber evidence="1">6.1.1.5</ecNumber>
    </recommendedName>
    <alternativeName>
        <fullName evidence="1">Isoleucyl-tRNA synthetase</fullName>
        <shortName evidence="1">IleRS</shortName>
    </alternativeName>
</protein>
<comment type="function">
    <text evidence="1">Catalyzes the attachment of isoleucine to tRNA(Ile). As IleRS can inadvertently accommodate and process structurally similar amino acids such as valine, to avoid such errors it has two additional distinct tRNA(Ile)-dependent editing activities. One activity is designated as 'pretransfer' editing and involves the hydrolysis of activated Val-AMP. The other activity is designated 'posttransfer' editing and involves deacylation of mischarged Val-tRNA(Ile).</text>
</comment>
<comment type="catalytic activity">
    <reaction evidence="1">
        <text>tRNA(Ile) + L-isoleucine + ATP = L-isoleucyl-tRNA(Ile) + AMP + diphosphate</text>
        <dbReference type="Rhea" id="RHEA:11060"/>
        <dbReference type="Rhea" id="RHEA-COMP:9666"/>
        <dbReference type="Rhea" id="RHEA-COMP:9695"/>
        <dbReference type="ChEBI" id="CHEBI:30616"/>
        <dbReference type="ChEBI" id="CHEBI:33019"/>
        <dbReference type="ChEBI" id="CHEBI:58045"/>
        <dbReference type="ChEBI" id="CHEBI:78442"/>
        <dbReference type="ChEBI" id="CHEBI:78528"/>
        <dbReference type="ChEBI" id="CHEBI:456215"/>
        <dbReference type="EC" id="6.1.1.5"/>
    </reaction>
</comment>
<comment type="cofactor">
    <cofactor evidence="1">
        <name>Zn(2+)</name>
        <dbReference type="ChEBI" id="CHEBI:29105"/>
    </cofactor>
    <text evidence="1">Binds 1 zinc ion per subunit.</text>
</comment>
<comment type="subunit">
    <text evidence="1">Monomer.</text>
</comment>
<comment type="subcellular location">
    <subcellularLocation>
        <location evidence="1">Cytoplasm</location>
    </subcellularLocation>
</comment>
<comment type="domain">
    <text evidence="1">IleRS has two distinct active sites: one for aminoacylation and one for editing. The misactivated valine is translocated from the active site to the editing site, which sterically excludes the correctly activated isoleucine. The single editing site contains two valyl binding pockets, one specific for each substrate (Val-AMP or Val-tRNA(Ile)).</text>
</comment>
<comment type="similarity">
    <text evidence="1">Belongs to the class-I aminoacyl-tRNA synthetase family. IleS type 1 subfamily.</text>
</comment>
<organism>
    <name type="scientific">Prochlorococcus marinus (strain AS9601)</name>
    <dbReference type="NCBI Taxonomy" id="146891"/>
    <lineage>
        <taxon>Bacteria</taxon>
        <taxon>Bacillati</taxon>
        <taxon>Cyanobacteriota</taxon>
        <taxon>Cyanophyceae</taxon>
        <taxon>Synechococcales</taxon>
        <taxon>Prochlorococcaceae</taxon>
        <taxon>Prochlorococcus</taxon>
    </lineage>
</organism>
<keyword id="KW-0030">Aminoacyl-tRNA synthetase</keyword>
<keyword id="KW-0067">ATP-binding</keyword>
<keyword id="KW-0963">Cytoplasm</keyword>
<keyword id="KW-0436">Ligase</keyword>
<keyword id="KW-0479">Metal-binding</keyword>
<keyword id="KW-0547">Nucleotide-binding</keyword>
<keyword id="KW-0648">Protein biosynthesis</keyword>
<keyword id="KW-0862">Zinc</keyword>
<gene>
    <name evidence="1" type="primary">ileS</name>
    <name type="ordered locus">A9601_02591</name>
</gene>
<accession>A2BP36</accession>
<name>SYI_PROMS</name>
<dbReference type="EC" id="6.1.1.5" evidence="1"/>
<dbReference type="EMBL" id="CP000551">
    <property type="protein sequence ID" value="ABM69547.1"/>
    <property type="molecule type" value="Genomic_DNA"/>
</dbReference>
<dbReference type="RefSeq" id="WP_011817731.1">
    <property type="nucleotide sequence ID" value="NC_008816.1"/>
</dbReference>
<dbReference type="SMR" id="A2BP36"/>
<dbReference type="STRING" id="146891.A9601_02591"/>
<dbReference type="KEGG" id="pmb:A9601_02591"/>
<dbReference type="eggNOG" id="COG0060">
    <property type="taxonomic scope" value="Bacteria"/>
</dbReference>
<dbReference type="HOGENOM" id="CLU_001493_7_0_3"/>
<dbReference type="OrthoDB" id="9810365at2"/>
<dbReference type="Proteomes" id="UP000002590">
    <property type="component" value="Chromosome"/>
</dbReference>
<dbReference type="GO" id="GO:0005737">
    <property type="term" value="C:cytoplasm"/>
    <property type="evidence" value="ECO:0007669"/>
    <property type="project" value="UniProtKB-SubCell"/>
</dbReference>
<dbReference type="GO" id="GO:0002161">
    <property type="term" value="F:aminoacyl-tRNA deacylase activity"/>
    <property type="evidence" value="ECO:0007669"/>
    <property type="project" value="InterPro"/>
</dbReference>
<dbReference type="GO" id="GO:0005524">
    <property type="term" value="F:ATP binding"/>
    <property type="evidence" value="ECO:0007669"/>
    <property type="project" value="UniProtKB-UniRule"/>
</dbReference>
<dbReference type="GO" id="GO:0004822">
    <property type="term" value="F:isoleucine-tRNA ligase activity"/>
    <property type="evidence" value="ECO:0007669"/>
    <property type="project" value="UniProtKB-UniRule"/>
</dbReference>
<dbReference type="GO" id="GO:0000049">
    <property type="term" value="F:tRNA binding"/>
    <property type="evidence" value="ECO:0007669"/>
    <property type="project" value="InterPro"/>
</dbReference>
<dbReference type="GO" id="GO:0008270">
    <property type="term" value="F:zinc ion binding"/>
    <property type="evidence" value="ECO:0007669"/>
    <property type="project" value="UniProtKB-UniRule"/>
</dbReference>
<dbReference type="GO" id="GO:0006428">
    <property type="term" value="P:isoleucyl-tRNA aminoacylation"/>
    <property type="evidence" value="ECO:0007669"/>
    <property type="project" value="UniProtKB-UniRule"/>
</dbReference>
<dbReference type="CDD" id="cd07960">
    <property type="entry name" value="Anticodon_Ia_Ile_BEm"/>
    <property type="match status" value="1"/>
</dbReference>
<dbReference type="CDD" id="cd00818">
    <property type="entry name" value="IleRS_core"/>
    <property type="match status" value="1"/>
</dbReference>
<dbReference type="FunFam" id="3.40.50.620:FF:000152">
    <property type="entry name" value="Isoleucine--tRNA ligase"/>
    <property type="match status" value="1"/>
</dbReference>
<dbReference type="Gene3D" id="1.10.730.20">
    <property type="match status" value="1"/>
</dbReference>
<dbReference type="Gene3D" id="3.40.50.620">
    <property type="entry name" value="HUPs"/>
    <property type="match status" value="2"/>
</dbReference>
<dbReference type="Gene3D" id="3.90.740.10">
    <property type="entry name" value="Valyl/Leucyl/Isoleucyl-tRNA synthetase, editing domain"/>
    <property type="match status" value="1"/>
</dbReference>
<dbReference type="HAMAP" id="MF_02002">
    <property type="entry name" value="Ile_tRNA_synth_type1"/>
    <property type="match status" value="1"/>
</dbReference>
<dbReference type="InterPro" id="IPR001412">
    <property type="entry name" value="aa-tRNA-synth_I_CS"/>
</dbReference>
<dbReference type="InterPro" id="IPR002300">
    <property type="entry name" value="aa-tRNA-synth_Ia"/>
</dbReference>
<dbReference type="InterPro" id="IPR033708">
    <property type="entry name" value="Anticodon_Ile_BEm"/>
</dbReference>
<dbReference type="InterPro" id="IPR002301">
    <property type="entry name" value="Ile-tRNA-ligase"/>
</dbReference>
<dbReference type="InterPro" id="IPR023585">
    <property type="entry name" value="Ile-tRNA-ligase_type1"/>
</dbReference>
<dbReference type="InterPro" id="IPR050081">
    <property type="entry name" value="Ile-tRNA_ligase"/>
</dbReference>
<dbReference type="InterPro" id="IPR013155">
    <property type="entry name" value="M/V/L/I-tRNA-synth_anticd-bd"/>
</dbReference>
<dbReference type="InterPro" id="IPR014729">
    <property type="entry name" value="Rossmann-like_a/b/a_fold"/>
</dbReference>
<dbReference type="InterPro" id="IPR009080">
    <property type="entry name" value="tRNAsynth_Ia_anticodon-bd"/>
</dbReference>
<dbReference type="InterPro" id="IPR009008">
    <property type="entry name" value="Val/Leu/Ile-tRNA-synth_edit"/>
</dbReference>
<dbReference type="InterPro" id="IPR010663">
    <property type="entry name" value="Znf_FPG/IleRS"/>
</dbReference>
<dbReference type="NCBIfam" id="TIGR00392">
    <property type="entry name" value="ileS"/>
    <property type="match status" value="1"/>
</dbReference>
<dbReference type="PANTHER" id="PTHR42765:SF1">
    <property type="entry name" value="ISOLEUCINE--TRNA LIGASE, MITOCHONDRIAL"/>
    <property type="match status" value="1"/>
</dbReference>
<dbReference type="PANTHER" id="PTHR42765">
    <property type="entry name" value="SOLEUCYL-TRNA SYNTHETASE"/>
    <property type="match status" value="1"/>
</dbReference>
<dbReference type="Pfam" id="PF08264">
    <property type="entry name" value="Anticodon_1"/>
    <property type="match status" value="1"/>
</dbReference>
<dbReference type="Pfam" id="PF00133">
    <property type="entry name" value="tRNA-synt_1"/>
    <property type="match status" value="1"/>
</dbReference>
<dbReference type="Pfam" id="PF06827">
    <property type="entry name" value="zf-FPG_IleRS"/>
    <property type="match status" value="1"/>
</dbReference>
<dbReference type="PRINTS" id="PR00984">
    <property type="entry name" value="TRNASYNTHILE"/>
</dbReference>
<dbReference type="SUPFAM" id="SSF47323">
    <property type="entry name" value="Anticodon-binding domain of a subclass of class I aminoacyl-tRNA synthetases"/>
    <property type="match status" value="1"/>
</dbReference>
<dbReference type="SUPFAM" id="SSF52374">
    <property type="entry name" value="Nucleotidylyl transferase"/>
    <property type="match status" value="1"/>
</dbReference>
<dbReference type="SUPFAM" id="SSF50677">
    <property type="entry name" value="ValRS/IleRS/LeuRS editing domain"/>
    <property type="match status" value="1"/>
</dbReference>
<dbReference type="PROSITE" id="PS00178">
    <property type="entry name" value="AA_TRNA_LIGASE_I"/>
    <property type="match status" value="1"/>
</dbReference>
<sequence>MKSQNSKEQKSDFSYKETLNLLKTDFSMRANSVVREPEIQNFWAKNNIDFKLGSNNSGEIFTLHDGPPYANGALHMGHALNKVLKDIINKYKTLRGFRVHYVPGWDCHGLPIELKVLQNLKSDERKNLDTLNLRKKATDYAHIQINNQMEGFKRWGIWGDWDNPYLTLKKSYESAQIGVFGKMFLNGYIYRGLKPVHWSPSSRTALAEAELEYPDEHYSKSIYISLKITKISEEILLNFVQENLNIKREFFENNSFITIWTTTPWTIPANEAVAVNPKIKYVFAIDEEKRIYLFAKDLSTEISNKFNKDLKVLLEVKGSQLENIEYQHPSKNKNCRIVIGGDYITTESGTGIVHTAPGHGVDDFNVGQKYDLPITCVVDEKGNLNEYSGQFQGSNVLKDANDLIIEYLKGNNLLLLQENYKHRYPYDWRTKKPTIFRATEQWFASVNGFRSSALQAIEDVEWMPATGKKRIYSMVVGRGDWCISRQRSWGVPIPVFYKKNGNDILLNSEIINHIQELFSEHGADIWWDWDVKNLLPEKYARESDLWKKGTDTMDVWFDSGSSWAAVCELRSELKYPADLYLEGSDQHRGWFQSSLLTSVAVNNKPPYKKVLTHGFALDENGRKMSKSLGNVVDPNIIINGGNNKKTEPAYGADVLRLWVSSVDYSVDVPIGSNILKQLADVYRKVRNTARYLLGNIHDYDPNIDSYEIDQLPLLDQWMLGRLVEVTDQISNAYENYEFSKFFQILQSFCVVDLSNFYLDIAKDRLYVSSKSQFRRRSCQFVMSKVVENLAVLISPVLCHMAEDIWQNIPYLTKEKSVFQRGWPIFAQSWKNQILNEHIANLRNLRVEINKAIEGCRNKQIIGAALETEVNYLPEDKVVKDSLIWLQEFGSQDVDLFRDWLIVSNFQVVSDLVENSLIIDNNALGKIQIIKAQGQKCDRCWHYQKETFNGIQNTKLCKRCSNIINLEFT</sequence>
<proteinExistence type="inferred from homology"/>
<evidence type="ECO:0000255" key="1">
    <source>
        <dbReference type="HAMAP-Rule" id="MF_02002"/>
    </source>
</evidence>
<feature type="chain" id="PRO_1000022101" description="Isoleucine--tRNA ligase">
    <location>
        <begin position="1"/>
        <end position="968"/>
    </location>
</feature>
<feature type="short sequence motif" description="'HIGH' region">
    <location>
        <begin position="68"/>
        <end position="78"/>
    </location>
</feature>
<feature type="short sequence motif" description="'KMSKS' region">
    <location>
        <begin position="623"/>
        <end position="627"/>
    </location>
</feature>
<feature type="binding site" evidence="1">
    <location>
        <position position="582"/>
    </location>
    <ligand>
        <name>L-isoleucyl-5'-AMP</name>
        <dbReference type="ChEBI" id="CHEBI:178002"/>
    </ligand>
</feature>
<feature type="binding site" evidence="1">
    <location>
        <position position="626"/>
    </location>
    <ligand>
        <name>ATP</name>
        <dbReference type="ChEBI" id="CHEBI:30616"/>
    </ligand>
</feature>
<feature type="binding site" evidence="1">
    <location>
        <position position="936"/>
    </location>
    <ligand>
        <name>Zn(2+)</name>
        <dbReference type="ChEBI" id="CHEBI:29105"/>
    </ligand>
</feature>
<feature type="binding site" evidence="1">
    <location>
        <position position="939"/>
    </location>
    <ligand>
        <name>Zn(2+)</name>
        <dbReference type="ChEBI" id="CHEBI:29105"/>
    </ligand>
</feature>
<feature type="binding site" evidence="1">
    <location>
        <position position="956"/>
    </location>
    <ligand>
        <name>Zn(2+)</name>
        <dbReference type="ChEBI" id="CHEBI:29105"/>
    </ligand>
</feature>
<feature type="binding site" evidence="1">
    <location>
        <position position="959"/>
    </location>
    <ligand>
        <name>Zn(2+)</name>
        <dbReference type="ChEBI" id="CHEBI:29105"/>
    </ligand>
</feature>
<reference key="1">
    <citation type="journal article" date="2007" name="PLoS Genet.">
        <title>Patterns and implications of gene gain and loss in the evolution of Prochlorococcus.</title>
        <authorList>
            <person name="Kettler G.C."/>
            <person name="Martiny A.C."/>
            <person name="Huang K."/>
            <person name="Zucker J."/>
            <person name="Coleman M.L."/>
            <person name="Rodrigue S."/>
            <person name="Chen F."/>
            <person name="Lapidus A."/>
            <person name="Ferriera S."/>
            <person name="Johnson J."/>
            <person name="Steglich C."/>
            <person name="Church G.M."/>
            <person name="Richardson P."/>
            <person name="Chisholm S.W."/>
        </authorList>
    </citation>
    <scope>NUCLEOTIDE SEQUENCE [LARGE SCALE GENOMIC DNA]</scope>
    <source>
        <strain>AS9601</strain>
    </source>
</reference>